<comment type="function">
    <text evidence="1">Involved in maceration and soft-rotting of plant tissue.</text>
</comment>
<comment type="catalytic activity">
    <reaction>
        <text>[(1-&gt;4)-alpha-D-galacturonosyl methyl ester](n) + n H2O = [(1-&gt;4)-alpha-D-galacturonosyl](n) + n methanol + n H(+)</text>
        <dbReference type="Rhea" id="RHEA:22380"/>
        <dbReference type="Rhea" id="RHEA-COMP:14570"/>
        <dbReference type="Rhea" id="RHEA-COMP:14573"/>
        <dbReference type="ChEBI" id="CHEBI:15377"/>
        <dbReference type="ChEBI" id="CHEBI:15378"/>
        <dbReference type="ChEBI" id="CHEBI:17790"/>
        <dbReference type="ChEBI" id="CHEBI:140522"/>
        <dbReference type="ChEBI" id="CHEBI:140523"/>
        <dbReference type="EC" id="3.1.1.11"/>
    </reaction>
</comment>
<comment type="pathway">
    <text>Glycan metabolism; pectin degradation; 2-dehydro-3-deoxy-D-gluconate from pectin: step 1/5.</text>
</comment>
<comment type="subcellular location">
    <subcellularLocation>
        <location evidence="1">Secreted</location>
    </subcellularLocation>
</comment>
<comment type="similarity">
    <text evidence="4">Belongs to the pectinesterase family.</text>
</comment>
<protein>
    <recommendedName>
        <fullName>Probable pectinesterase A</fullName>
        <ecNumber>3.1.1.11</ecNumber>
    </recommendedName>
    <alternativeName>
        <fullName>Pectin methylesterase A</fullName>
    </alternativeName>
</protein>
<sequence length="324" mass="34873">MHLPSLVLGLLGLGLTASASPIEERSNRSKAPDGCLTVGSSGKYSTIGAALDALGDSKSDACIFIGAGTYKEQITIDYKGKLTMYGETTDTSSYKKNQVTITHTISSPQAGTLDKSATVNVRSDGFKMYNINVINGYGKGSQAVALVANADKLGFYGCSFVGYQDTLYAKAGRQYYSNCYIEGATDYIFGNASAWFGECDIMSVGPGYITAMSRTTADQTTWYAIDNCNIYGKPGVDLTAKVYLGRPWRVLARVIYQNSQLSNIINPKGWTTMAEGATPLYYEYNNKGAGADTSKREYESSISGAVSMNTVLGSGWNSWIDTTY</sequence>
<feature type="signal peptide" evidence="2">
    <location>
        <begin position="1"/>
        <end position="19"/>
    </location>
</feature>
<feature type="chain" id="PRO_0000394084" description="Probable pectinesterase A">
    <location>
        <begin position="20"/>
        <end position="324"/>
    </location>
</feature>
<feature type="active site" description="Proton donor" evidence="3">
    <location>
        <position position="165"/>
    </location>
</feature>
<feature type="active site" description="Nucleophile" evidence="3">
    <location>
        <position position="186"/>
    </location>
</feature>
<feature type="binding site" evidence="1">
    <location>
        <position position="142"/>
    </location>
    <ligand>
        <name>substrate</name>
    </ligand>
</feature>
<feature type="binding site" evidence="1">
    <location>
        <position position="246"/>
    </location>
    <ligand>
        <name>substrate</name>
    </ligand>
</feature>
<feature type="binding site" evidence="1">
    <location>
        <position position="248"/>
    </location>
    <ligand>
        <name>substrate</name>
    </ligand>
</feature>
<feature type="site" description="Transition state stabilizer" evidence="1">
    <location>
        <position position="164"/>
    </location>
</feature>
<feature type="glycosylation site" description="N-linked (GlcNAc...) asparagine" evidence="2">
    <location>
        <position position="27"/>
    </location>
</feature>
<feature type="glycosylation site" description="N-linked (GlcNAc...) asparagine" evidence="2">
    <location>
        <position position="191"/>
    </location>
</feature>
<dbReference type="EC" id="3.1.1.11"/>
<dbReference type="EMBL" id="DS027694">
    <property type="protein sequence ID" value="EAW20324.1"/>
    <property type="molecule type" value="Genomic_DNA"/>
</dbReference>
<dbReference type="RefSeq" id="XP_001262221.1">
    <property type="nucleotide sequence ID" value="XM_001262220.1"/>
</dbReference>
<dbReference type="SMR" id="A1DBT4"/>
<dbReference type="STRING" id="331117.A1DBT4"/>
<dbReference type="GlyCosmos" id="A1DBT4">
    <property type="glycosylation" value="2 sites, No reported glycans"/>
</dbReference>
<dbReference type="EnsemblFungi" id="EAW20324">
    <property type="protein sequence ID" value="EAW20324"/>
    <property type="gene ID" value="NFIA_099600"/>
</dbReference>
<dbReference type="GeneID" id="4588575"/>
<dbReference type="KEGG" id="nfi:NFIA_099600"/>
<dbReference type="VEuPathDB" id="FungiDB:NFIA_099600"/>
<dbReference type="eggNOG" id="ENOG502QSQ4">
    <property type="taxonomic scope" value="Eukaryota"/>
</dbReference>
<dbReference type="HOGENOM" id="CLU_012243_1_2_1"/>
<dbReference type="OMA" id="CQFSGYQ"/>
<dbReference type="OrthoDB" id="2019149at2759"/>
<dbReference type="UniPathway" id="UPA00545">
    <property type="reaction ID" value="UER00823"/>
</dbReference>
<dbReference type="Proteomes" id="UP000006702">
    <property type="component" value="Unassembled WGS sequence"/>
</dbReference>
<dbReference type="GO" id="GO:0005576">
    <property type="term" value="C:extracellular region"/>
    <property type="evidence" value="ECO:0007669"/>
    <property type="project" value="UniProtKB-SubCell"/>
</dbReference>
<dbReference type="GO" id="GO:0030599">
    <property type="term" value="F:pectinesterase activity"/>
    <property type="evidence" value="ECO:0007669"/>
    <property type="project" value="UniProtKB-EC"/>
</dbReference>
<dbReference type="GO" id="GO:0042545">
    <property type="term" value="P:cell wall modification"/>
    <property type="evidence" value="ECO:0007669"/>
    <property type="project" value="InterPro"/>
</dbReference>
<dbReference type="GO" id="GO:0045490">
    <property type="term" value="P:pectin catabolic process"/>
    <property type="evidence" value="ECO:0007669"/>
    <property type="project" value="UniProtKB-UniPathway"/>
</dbReference>
<dbReference type="FunFam" id="2.160.20.10:FF:000014">
    <property type="entry name" value="Pectinesterase"/>
    <property type="match status" value="1"/>
</dbReference>
<dbReference type="Gene3D" id="2.160.20.10">
    <property type="entry name" value="Single-stranded right-handed beta-helix, Pectin lyase-like"/>
    <property type="match status" value="1"/>
</dbReference>
<dbReference type="InterPro" id="IPR012334">
    <property type="entry name" value="Pectin_lyas_fold"/>
</dbReference>
<dbReference type="InterPro" id="IPR011050">
    <property type="entry name" value="Pectin_lyase_fold/virulence"/>
</dbReference>
<dbReference type="InterPro" id="IPR033131">
    <property type="entry name" value="Pectinesterase_Asp_AS"/>
</dbReference>
<dbReference type="InterPro" id="IPR000070">
    <property type="entry name" value="Pectinesterase_cat"/>
</dbReference>
<dbReference type="PANTHER" id="PTHR31321">
    <property type="entry name" value="ACYL-COA THIOESTER HYDROLASE YBHC-RELATED"/>
    <property type="match status" value="1"/>
</dbReference>
<dbReference type="PANTHER" id="PTHR31321:SF57">
    <property type="entry name" value="PECTINESTERASE 53-RELATED"/>
    <property type="match status" value="1"/>
</dbReference>
<dbReference type="Pfam" id="PF01095">
    <property type="entry name" value="Pectinesterase"/>
    <property type="match status" value="1"/>
</dbReference>
<dbReference type="SUPFAM" id="SSF51126">
    <property type="entry name" value="Pectin lyase-like"/>
    <property type="match status" value="1"/>
</dbReference>
<dbReference type="PROSITE" id="PS00503">
    <property type="entry name" value="PECTINESTERASE_2"/>
    <property type="match status" value="1"/>
</dbReference>
<name>PMEA_NEOFI</name>
<gene>
    <name type="primary">pmeA</name>
    <name type="ORF">NFIA_099600</name>
</gene>
<keyword id="KW-0063">Aspartyl esterase</keyword>
<keyword id="KW-0961">Cell wall biogenesis/degradation</keyword>
<keyword id="KW-0325">Glycoprotein</keyword>
<keyword id="KW-0378">Hydrolase</keyword>
<keyword id="KW-1185">Reference proteome</keyword>
<keyword id="KW-0964">Secreted</keyword>
<keyword id="KW-0732">Signal</keyword>
<evidence type="ECO:0000250" key="1"/>
<evidence type="ECO:0000255" key="2"/>
<evidence type="ECO:0000255" key="3">
    <source>
        <dbReference type="PROSITE-ProRule" id="PRU10040"/>
    </source>
</evidence>
<evidence type="ECO:0000305" key="4"/>
<organism>
    <name type="scientific">Neosartorya fischeri (strain ATCC 1020 / DSM 3700 / CBS 544.65 / FGSC A1164 / JCM 1740 / NRRL 181 / WB 181)</name>
    <name type="common">Aspergillus fischerianus</name>
    <dbReference type="NCBI Taxonomy" id="331117"/>
    <lineage>
        <taxon>Eukaryota</taxon>
        <taxon>Fungi</taxon>
        <taxon>Dikarya</taxon>
        <taxon>Ascomycota</taxon>
        <taxon>Pezizomycotina</taxon>
        <taxon>Eurotiomycetes</taxon>
        <taxon>Eurotiomycetidae</taxon>
        <taxon>Eurotiales</taxon>
        <taxon>Aspergillaceae</taxon>
        <taxon>Aspergillus</taxon>
        <taxon>Aspergillus subgen. Fumigati</taxon>
    </lineage>
</organism>
<proteinExistence type="inferred from homology"/>
<accession>A1DBT4</accession>
<reference key="1">
    <citation type="journal article" date="2008" name="PLoS Genet.">
        <title>Genomic islands in the pathogenic filamentous fungus Aspergillus fumigatus.</title>
        <authorList>
            <person name="Fedorova N.D."/>
            <person name="Khaldi N."/>
            <person name="Joardar V.S."/>
            <person name="Maiti R."/>
            <person name="Amedeo P."/>
            <person name="Anderson M.J."/>
            <person name="Crabtree J."/>
            <person name="Silva J.C."/>
            <person name="Badger J.H."/>
            <person name="Albarraq A."/>
            <person name="Angiuoli S."/>
            <person name="Bussey H."/>
            <person name="Bowyer P."/>
            <person name="Cotty P.J."/>
            <person name="Dyer P.S."/>
            <person name="Egan A."/>
            <person name="Galens K."/>
            <person name="Fraser-Liggett C.M."/>
            <person name="Haas B.J."/>
            <person name="Inman J.M."/>
            <person name="Kent R."/>
            <person name="Lemieux S."/>
            <person name="Malavazi I."/>
            <person name="Orvis J."/>
            <person name="Roemer T."/>
            <person name="Ronning C.M."/>
            <person name="Sundaram J.P."/>
            <person name="Sutton G."/>
            <person name="Turner G."/>
            <person name="Venter J.C."/>
            <person name="White O.R."/>
            <person name="Whitty B.R."/>
            <person name="Youngman P."/>
            <person name="Wolfe K.H."/>
            <person name="Goldman G.H."/>
            <person name="Wortman J.R."/>
            <person name="Jiang B."/>
            <person name="Denning D.W."/>
            <person name="Nierman W.C."/>
        </authorList>
    </citation>
    <scope>NUCLEOTIDE SEQUENCE [LARGE SCALE GENOMIC DNA]</scope>
    <source>
        <strain>ATCC 1020 / DSM 3700 / CBS 544.65 / FGSC A1164 / JCM 1740 / NRRL 181 / WB 181</strain>
    </source>
</reference>